<name>PYRF_ACIAD</name>
<protein>
    <recommendedName>
        <fullName evidence="1">Orotidine 5'-phosphate decarboxylase</fullName>
        <ecNumber evidence="1">4.1.1.23</ecNumber>
    </recommendedName>
    <alternativeName>
        <fullName evidence="1">OMP decarboxylase</fullName>
        <shortName evidence="1">OMPDCase</shortName>
        <shortName evidence="1">OMPdecase</shortName>
    </alternativeName>
</protein>
<sequence length="227" mass="24887">MSIIVALDAKSQYDALSIADQLDPSLCRVKVGKELFTHDGPQTVRILQDRGFELFLDLKFHDIPNTTAQAVCAAADLGVWMVNVHASGGRKMMETCVERLKAGNYRTQLIAVTVLTSMGREDLRDIGLDVEPFEQVKRLAQLTQESGLDGVVCSAQEAKMLRDLLGTEFALVTPGIRPEGANADDQKRIVTPKQAMLDGSTHLVIGRPITKSERPNEMLKQILSSLA</sequence>
<gene>
    <name evidence="1" type="primary">pyrF</name>
    <name type="ordered locus">ACIAD2341</name>
</gene>
<keyword id="KW-0210">Decarboxylase</keyword>
<keyword id="KW-0456">Lyase</keyword>
<keyword id="KW-0665">Pyrimidine biosynthesis</keyword>
<proteinExistence type="inferred from homology"/>
<reference key="1">
    <citation type="journal article" date="2004" name="Nucleic Acids Res.">
        <title>Unique features revealed by the genome sequence of Acinetobacter sp. ADP1, a versatile and naturally transformation competent bacterium.</title>
        <authorList>
            <person name="Barbe V."/>
            <person name="Vallenet D."/>
            <person name="Fonknechten N."/>
            <person name="Kreimeyer A."/>
            <person name="Oztas S."/>
            <person name="Labarre L."/>
            <person name="Cruveiller S."/>
            <person name="Robert C."/>
            <person name="Duprat S."/>
            <person name="Wincker P."/>
            <person name="Ornston L.N."/>
            <person name="Weissenbach J."/>
            <person name="Marliere P."/>
            <person name="Cohen G.N."/>
            <person name="Medigue C."/>
        </authorList>
    </citation>
    <scope>NUCLEOTIDE SEQUENCE [LARGE SCALE GENOMIC DNA]</scope>
    <source>
        <strain>ATCC 33305 / BD413 / ADP1</strain>
    </source>
</reference>
<comment type="function">
    <text evidence="1">Catalyzes the decarboxylation of orotidine 5'-monophosphate (OMP) to uridine 5'-monophosphate (UMP).</text>
</comment>
<comment type="catalytic activity">
    <reaction evidence="1">
        <text>orotidine 5'-phosphate + H(+) = UMP + CO2</text>
        <dbReference type="Rhea" id="RHEA:11596"/>
        <dbReference type="ChEBI" id="CHEBI:15378"/>
        <dbReference type="ChEBI" id="CHEBI:16526"/>
        <dbReference type="ChEBI" id="CHEBI:57538"/>
        <dbReference type="ChEBI" id="CHEBI:57865"/>
        <dbReference type="EC" id="4.1.1.23"/>
    </reaction>
</comment>
<comment type="pathway">
    <text evidence="1">Pyrimidine metabolism; UMP biosynthesis via de novo pathway; UMP from orotate: step 2/2.</text>
</comment>
<comment type="subunit">
    <text evidence="1">Homodimer.</text>
</comment>
<comment type="similarity">
    <text evidence="1">Belongs to the OMP decarboxylase family. Type 1 subfamily.</text>
</comment>
<dbReference type="EC" id="4.1.1.23" evidence="1"/>
<dbReference type="EMBL" id="CR543861">
    <property type="protein sequence ID" value="CAG69120.1"/>
    <property type="molecule type" value="Genomic_DNA"/>
</dbReference>
<dbReference type="RefSeq" id="WP_004928119.1">
    <property type="nucleotide sequence ID" value="NC_005966.1"/>
</dbReference>
<dbReference type="SMR" id="Q6F9Z3"/>
<dbReference type="STRING" id="202950.GCA_001485005_00066"/>
<dbReference type="GeneID" id="45234657"/>
<dbReference type="KEGG" id="aci:ACIAD2341"/>
<dbReference type="eggNOG" id="COG0284">
    <property type="taxonomic scope" value="Bacteria"/>
</dbReference>
<dbReference type="HOGENOM" id="CLU_067069_0_0_6"/>
<dbReference type="OrthoDB" id="9806203at2"/>
<dbReference type="BioCyc" id="ASP62977:ACIAD_RS10700-MONOMER"/>
<dbReference type="UniPathway" id="UPA00070">
    <property type="reaction ID" value="UER00120"/>
</dbReference>
<dbReference type="Proteomes" id="UP000000430">
    <property type="component" value="Chromosome"/>
</dbReference>
<dbReference type="GO" id="GO:0005829">
    <property type="term" value="C:cytosol"/>
    <property type="evidence" value="ECO:0007669"/>
    <property type="project" value="TreeGrafter"/>
</dbReference>
<dbReference type="GO" id="GO:0004590">
    <property type="term" value="F:orotidine-5'-phosphate decarboxylase activity"/>
    <property type="evidence" value="ECO:0007669"/>
    <property type="project" value="UniProtKB-UniRule"/>
</dbReference>
<dbReference type="GO" id="GO:0006207">
    <property type="term" value="P:'de novo' pyrimidine nucleobase biosynthetic process"/>
    <property type="evidence" value="ECO:0007669"/>
    <property type="project" value="InterPro"/>
</dbReference>
<dbReference type="GO" id="GO:0044205">
    <property type="term" value="P:'de novo' UMP biosynthetic process"/>
    <property type="evidence" value="ECO:0007669"/>
    <property type="project" value="UniProtKB-UniRule"/>
</dbReference>
<dbReference type="CDD" id="cd04725">
    <property type="entry name" value="OMP_decarboxylase_like"/>
    <property type="match status" value="1"/>
</dbReference>
<dbReference type="FunFam" id="3.20.20.70:FF:000015">
    <property type="entry name" value="Orotidine 5'-phosphate decarboxylase"/>
    <property type="match status" value="1"/>
</dbReference>
<dbReference type="Gene3D" id="3.20.20.70">
    <property type="entry name" value="Aldolase class I"/>
    <property type="match status" value="1"/>
</dbReference>
<dbReference type="HAMAP" id="MF_01200_B">
    <property type="entry name" value="OMPdecase_type1_B"/>
    <property type="match status" value="1"/>
</dbReference>
<dbReference type="InterPro" id="IPR013785">
    <property type="entry name" value="Aldolase_TIM"/>
</dbReference>
<dbReference type="InterPro" id="IPR014732">
    <property type="entry name" value="OMPdecase"/>
</dbReference>
<dbReference type="InterPro" id="IPR018089">
    <property type="entry name" value="OMPdecase_AS"/>
</dbReference>
<dbReference type="InterPro" id="IPR047596">
    <property type="entry name" value="OMPdecase_bac"/>
</dbReference>
<dbReference type="InterPro" id="IPR001754">
    <property type="entry name" value="OMPdeCOase_dom"/>
</dbReference>
<dbReference type="InterPro" id="IPR011060">
    <property type="entry name" value="RibuloseP-bd_barrel"/>
</dbReference>
<dbReference type="NCBIfam" id="NF001273">
    <property type="entry name" value="PRK00230.1"/>
    <property type="match status" value="1"/>
</dbReference>
<dbReference type="NCBIfam" id="TIGR01740">
    <property type="entry name" value="pyrF"/>
    <property type="match status" value="1"/>
</dbReference>
<dbReference type="PANTHER" id="PTHR32119">
    <property type="entry name" value="OROTIDINE 5'-PHOSPHATE DECARBOXYLASE"/>
    <property type="match status" value="1"/>
</dbReference>
<dbReference type="PANTHER" id="PTHR32119:SF2">
    <property type="entry name" value="OROTIDINE 5'-PHOSPHATE DECARBOXYLASE"/>
    <property type="match status" value="1"/>
</dbReference>
<dbReference type="Pfam" id="PF00215">
    <property type="entry name" value="OMPdecase"/>
    <property type="match status" value="1"/>
</dbReference>
<dbReference type="SMART" id="SM00934">
    <property type="entry name" value="OMPdecase"/>
    <property type="match status" value="1"/>
</dbReference>
<dbReference type="SUPFAM" id="SSF51366">
    <property type="entry name" value="Ribulose-phoshate binding barrel"/>
    <property type="match status" value="1"/>
</dbReference>
<dbReference type="PROSITE" id="PS00156">
    <property type="entry name" value="OMPDECASE"/>
    <property type="match status" value="1"/>
</dbReference>
<accession>Q6F9Z3</accession>
<organism>
    <name type="scientific">Acinetobacter baylyi (strain ATCC 33305 / BD413 / ADP1)</name>
    <dbReference type="NCBI Taxonomy" id="62977"/>
    <lineage>
        <taxon>Bacteria</taxon>
        <taxon>Pseudomonadati</taxon>
        <taxon>Pseudomonadota</taxon>
        <taxon>Gammaproteobacteria</taxon>
        <taxon>Moraxellales</taxon>
        <taxon>Moraxellaceae</taxon>
        <taxon>Acinetobacter</taxon>
    </lineage>
</organism>
<evidence type="ECO:0000255" key="1">
    <source>
        <dbReference type="HAMAP-Rule" id="MF_01200"/>
    </source>
</evidence>
<feature type="chain" id="PRO_0000241840" description="Orotidine 5'-phosphate decarboxylase">
    <location>
        <begin position="1"/>
        <end position="227"/>
    </location>
</feature>
<feature type="active site" description="Proton donor" evidence="1">
    <location>
        <position position="59"/>
    </location>
</feature>
<feature type="binding site" evidence="1">
    <location>
        <position position="8"/>
    </location>
    <ligand>
        <name>substrate</name>
    </ligand>
</feature>
<feature type="binding site" evidence="1">
    <location>
        <position position="30"/>
    </location>
    <ligand>
        <name>substrate</name>
    </ligand>
</feature>
<feature type="binding site" evidence="1">
    <location>
        <begin position="57"/>
        <end position="66"/>
    </location>
    <ligand>
        <name>substrate</name>
    </ligand>
</feature>
<feature type="binding site" evidence="1">
    <location>
        <position position="116"/>
    </location>
    <ligand>
        <name>substrate</name>
    </ligand>
</feature>
<feature type="binding site" evidence="1">
    <location>
        <position position="177"/>
    </location>
    <ligand>
        <name>substrate</name>
    </ligand>
</feature>
<feature type="binding site" evidence="1">
    <location>
        <position position="186"/>
    </location>
    <ligand>
        <name>substrate</name>
    </ligand>
</feature>
<feature type="binding site" evidence="1">
    <location>
        <position position="206"/>
    </location>
    <ligand>
        <name>substrate</name>
    </ligand>
</feature>
<feature type="binding site" evidence="1">
    <location>
        <position position="207"/>
    </location>
    <ligand>
        <name>substrate</name>
    </ligand>
</feature>